<proteinExistence type="inferred from homology"/>
<protein>
    <recommendedName>
        <fullName evidence="1">Large ribosomal subunit protein uL11</fullName>
    </recommendedName>
    <alternativeName>
        <fullName evidence="2">50S ribosomal protein L11</fullName>
    </alternativeName>
</protein>
<reference key="1">
    <citation type="journal article" date="2006" name="Proc. Natl. Acad. Sci. U.S.A.">
        <title>Genome reduction in Leptospira borgpetersenii reflects limited transmission potential.</title>
        <authorList>
            <person name="Bulach D.M."/>
            <person name="Zuerner R.L."/>
            <person name="Wilson P."/>
            <person name="Seemann T."/>
            <person name="McGrath A."/>
            <person name="Cullen P.A."/>
            <person name="Davis J."/>
            <person name="Johnson M."/>
            <person name="Kuczek E."/>
            <person name="Alt D.P."/>
            <person name="Peterson-Burch B."/>
            <person name="Coppel R.L."/>
            <person name="Rood J.I."/>
            <person name="Davies J.K."/>
            <person name="Adler B."/>
        </authorList>
    </citation>
    <scope>NUCLEOTIDE SEQUENCE [LARGE SCALE GENOMIC DNA]</scope>
    <source>
        <strain>L550</strain>
    </source>
</reference>
<feature type="chain" id="PRO_1000046203" description="Large ribosomal subunit protein uL11">
    <location>
        <begin position="1"/>
        <end position="142"/>
    </location>
</feature>
<organism>
    <name type="scientific">Leptospira borgpetersenii serovar Hardjo-bovis (strain L550)</name>
    <dbReference type="NCBI Taxonomy" id="355276"/>
    <lineage>
        <taxon>Bacteria</taxon>
        <taxon>Pseudomonadati</taxon>
        <taxon>Spirochaetota</taxon>
        <taxon>Spirochaetia</taxon>
        <taxon>Leptospirales</taxon>
        <taxon>Leptospiraceae</taxon>
        <taxon>Leptospira</taxon>
    </lineage>
</organism>
<name>RL11_LEPBL</name>
<dbReference type="EMBL" id="CP000348">
    <property type="protein sequence ID" value="ABJ78299.1"/>
    <property type="molecule type" value="Genomic_DNA"/>
</dbReference>
<dbReference type="RefSeq" id="WP_002626022.1">
    <property type="nucleotide sequence ID" value="NC_008508.1"/>
</dbReference>
<dbReference type="SMR" id="Q054E6"/>
<dbReference type="GeneID" id="61111525"/>
<dbReference type="KEGG" id="lbl:LBL_0739"/>
<dbReference type="HOGENOM" id="CLU_074237_2_0_12"/>
<dbReference type="GO" id="GO:0022625">
    <property type="term" value="C:cytosolic large ribosomal subunit"/>
    <property type="evidence" value="ECO:0007669"/>
    <property type="project" value="TreeGrafter"/>
</dbReference>
<dbReference type="GO" id="GO:0070180">
    <property type="term" value="F:large ribosomal subunit rRNA binding"/>
    <property type="evidence" value="ECO:0007669"/>
    <property type="project" value="UniProtKB-UniRule"/>
</dbReference>
<dbReference type="GO" id="GO:0003735">
    <property type="term" value="F:structural constituent of ribosome"/>
    <property type="evidence" value="ECO:0007669"/>
    <property type="project" value="InterPro"/>
</dbReference>
<dbReference type="GO" id="GO:0006412">
    <property type="term" value="P:translation"/>
    <property type="evidence" value="ECO:0007669"/>
    <property type="project" value="UniProtKB-UniRule"/>
</dbReference>
<dbReference type="CDD" id="cd00349">
    <property type="entry name" value="Ribosomal_L11"/>
    <property type="match status" value="1"/>
</dbReference>
<dbReference type="FunFam" id="1.10.10.250:FF:000001">
    <property type="entry name" value="50S ribosomal protein L11"/>
    <property type="match status" value="1"/>
</dbReference>
<dbReference type="FunFam" id="3.30.1550.10:FF:000001">
    <property type="entry name" value="50S ribosomal protein L11"/>
    <property type="match status" value="1"/>
</dbReference>
<dbReference type="Gene3D" id="1.10.10.250">
    <property type="entry name" value="Ribosomal protein L11, C-terminal domain"/>
    <property type="match status" value="1"/>
</dbReference>
<dbReference type="Gene3D" id="3.30.1550.10">
    <property type="entry name" value="Ribosomal protein L11/L12, N-terminal domain"/>
    <property type="match status" value="1"/>
</dbReference>
<dbReference type="HAMAP" id="MF_00736">
    <property type="entry name" value="Ribosomal_uL11"/>
    <property type="match status" value="1"/>
</dbReference>
<dbReference type="InterPro" id="IPR000911">
    <property type="entry name" value="Ribosomal_uL11"/>
</dbReference>
<dbReference type="InterPro" id="IPR006519">
    <property type="entry name" value="Ribosomal_uL11_bac-typ"/>
</dbReference>
<dbReference type="InterPro" id="IPR020783">
    <property type="entry name" value="Ribosomal_uL11_C"/>
</dbReference>
<dbReference type="InterPro" id="IPR036769">
    <property type="entry name" value="Ribosomal_uL11_C_sf"/>
</dbReference>
<dbReference type="InterPro" id="IPR020785">
    <property type="entry name" value="Ribosomal_uL11_CS"/>
</dbReference>
<dbReference type="InterPro" id="IPR020784">
    <property type="entry name" value="Ribosomal_uL11_N"/>
</dbReference>
<dbReference type="InterPro" id="IPR036796">
    <property type="entry name" value="Ribosomal_uL11_N_sf"/>
</dbReference>
<dbReference type="NCBIfam" id="TIGR01632">
    <property type="entry name" value="L11_bact"/>
    <property type="match status" value="1"/>
</dbReference>
<dbReference type="PANTHER" id="PTHR11661">
    <property type="entry name" value="60S RIBOSOMAL PROTEIN L12"/>
    <property type="match status" value="1"/>
</dbReference>
<dbReference type="PANTHER" id="PTHR11661:SF1">
    <property type="entry name" value="LARGE RIBOSOMAL SUBUNIT PROTEIN UL11M"/>
    <property type="match status" value="1"/>
</dbReference>
<dbReference type="Pfam" id="PF00298">
    <property type="entry name" value="Ribosomal_L11"/>
    <property type="match status" value="1"/>
</dbReference>
<dbReference type="Pfam" id="PF03946">
    <property type="entry name" value="Ribosomal_L11_N"/>
    <property type="match status" value="1"/>
</dbReference>
<dbReference type="SMART" id="SM00649">
    <property type="entry name" value="RL11"/>
    <property type="match status" value="1"/>
</dbReference>
<dbReference type="SUPFAM" id="SSF54747">
    <property type="entry name" value="Ribosomal L11/L12e N-terminal domain"/>
    <property type="match status" value="1"/>
</dbReference>
<dbReference type="SUPFAM" id="SSF46906">
    <property type="entry name" value="Ribosomal protein L11, C-terminal domain"/>
    <property type="match status" value="1"/>
</dbReference>
<dbReference type="PROSITE" id="PS00359">
    <property type="entry name" value="RIBOSOMAL_L11"/>
    <property type="match status" value="1"/>
</dbReference>
<keyword id="KW-0488">Methylation</keyword>
<keyword id="KW-0687">Ribonucleoprotein</keyword>
<keyword id="KW-0689">Ribosomal protein</keyword>
<keyword id="KW-0694">RNA-binding</keyword>
<keyword id="KW-0699">rRNA-binding</keyword>
<accession>Q054E6</accession>
<evidence type="ECO:0000255" key="1">
    <source>
        <dbReference type="HAMAP-Rule" id="MF_00736"/>
    </source>
</evidence>
<evidence type="ECO:0000305" key="2"/>
<comment type="function">
    <text evidence="1">Forms part of the ribosomal stalk which helps the ribosome interact with GTP-bound translation factors.</text>
</comment>
<comment type="subunit">
    <text evidence="1">Part of the ribosomal stalk of the 50S ribosomal subunit. Interacts with L10 and the large rRNA to form the base of the stalk. L10 forms an elongated spine to which L12 dimers bind in a sequential fashion forming a multimeric L10(L12)X complex.</text>
</comment>
<comment type="PTM">
    <text evidence="1">One or more lysine residues are methylated.</text>
</comment>
<comment type="similarity">
    <text evidence="1">Belongs to the universal ribosomal protein uL11 family.</text>
</comment>
<sequence length="142" mass="15134">MAAKKVVKQIKLQVEAGKANPAPPVGPALGQAGLNIMEFCKQFNERSKAQIGLKLPVVITVFSDRSFTFITKSPPAALLVKKAIGLETGSPTPHTHKVGKITRKQLEEIAKTKMEDLNANDIDAAVNIIAGTCRSMGVTVEA</sequence>
<gene>
    <name evidence="1" type="primary">rplK</name>
    <name type="ordered locus">LBL_0739</name>
</gene>